<evidence type="ECO:0000255" key="1">
    <source>
        <dbReference type="HAMAP-Rule" id="MF_00589"/>
    </source>
</evidence>
<protein>
    <recommendedName>
        <fullName evidence="1">Photosystem II extrinsic protein U</fullName>
        <shortName evidence="1">PSII-U</shortName>
        <shortName evidence="1">PsbU</shortName>
    </recommendedName>
    <alternativeName>
        <fullName evidence="1">Photosystem II 12 kDa extrinsic protein</fullName>
        <shortName evidence="1">PS II complex 12 kDa extrinsic protein</shortName>
    </alternativeName>
</protein>
<accession>A2C664</accession>
<sequence>MKRLLSLLTGVLVMTGLLMALIFPQSAYANVSDEKLGDRGEKVDLNNSSVRAFRQFPGMFPTIAGKIVVGGPYSSVSDASSVLDASQKSVFDKYKDNFTVTDQEIAVNEGFDRINDGQYR</sequence>
<keyword id="KW-0249">Electron transport</keyword>
<keyword id="KW-0472">Membrane</keyword>
<keyword id="KW-0602">Photosynthesis</keyword>
<keyword id="KW-0604">Photosystem II</keyword>
<keyword id="KW-0732">Signal</keyword>
<keyword id="KW-0793">Thylakoid</keyword>
<keyword id="KW-0813">Transport</keyword>
<dbReference type="EMBL" id="CP000554">
    <property type="protein sequence ID" value="ABM76974.1"/>
    <property type="molecule type" value="Genomic_DNA"/>
</dbReference>
<dbReference type="RefSeq" id="WP_011824902.1">
    <property type="nucleotide sequence ID" value="NC_008820.1"/>
</dbReference>
<dbReference type="SMR" id="A2C664"/>
<dbReference type="STRING" id="59922.P9303_02191"/>
<dbReference type="KEGG" id="pmf:P9303_02191"/>
<dbReference type="HOGENOM" id="CLU_141240_1_0_3"/>
<dbReference type="BioCyc" id="PMAR59922:G1G80-211-MONOMER"/>
<dbReference type="Proteomes" id="UP000002274">
    <property type="component" value="Chromosome"/>
</dbReference>
<dbReference type="GO" id="GO:0019898">
    <property type="term" value="C:extrinsic component of membrane"/>
    <property type="evidence" value="ECO:0007669"/>
    <property type="project" value="InterPro"/>
</dbReference>
<dbReference type="GO" id="GO:0009654">
    <property type="term" value="C:photosystem II oxygen evolving complex"/>
    <property type="evidence" value="ECO:0007669"/>
    <property type="project" value="InterPro"/>
</dbReference>
<dbReference type="GO" id="GO:0031676">
    <property type="term" value="C:plasma membrane-derived thylakoid membrane"/>
    <property type="evidence" value="ECO:0007669"/>
    <property type="project" value="UniProtKB-SubCell"/>
</dbReference>
<dbReference type="GO" id="GO:0015979">
    <property type="term" value="P:photosynthesis"/>
    <property type="evidence" value="ECO:0007669"/>
    <property type="project" value="UniProtKB-UniRule"/>
</dbReference>
<dbReference type="GO" id="GO:0042549">
    <property type="term" value="P:photosystem II stabilization"/>
    <property type="evidence" value="ECO:0007669"/>
    <property type="project" value="InterPro"/>
</dbReference>
<dbReference type="Gene3D" id="1.10.150.320">
    <property type="entry name" value="Photosystem II 12 kDa extrinsic protein"/>
    <property type="match status" value="1"/>
</dbReference>
<dbReference type="HAMAP" id="MF_00589">
    <property type="entry name" value="PSII_PsbU"/>
    <property type="match status" value="1"/>
</dbReference>
<dbReference type="InterPro" id="IPR010527">
    <property type="entry name" value="PSII_PsbU"/>
</dbReference>
<dbReference type="NCBIfam" id="NF002708">
    <property type="entry name" value="PRK02515.1"/>
    <property type="match status" value="1"/>
</dbReference>
<dbReference type="Pfam" id="PF06514">
    <property type="entry name" value="PsbU"/>
    <property type="match status" value="1"/>
</dbReference>
<dbReference type="SUPFAM" id="SSF81585">
    <property type="entry name" value="PsbU/PolX domain-like"/>
    <property type="match status" value="1"/>
</dbReference>
<gene>
    <name evidence="1" type="primary">psbU</name>
    <name type="ordered locus">P9303_02191</name>
</gene>
<proteinExistence type="inferred from homology"/>
<comment type="function">
    <text evidence="1">One of the extrinsic, lumenal subunits of photosystem II (PSII). PSII is a light-driven water plastoquinone oxidoreductase, using light energy to abstract electrons from H(2)O, generating a proton gradient subsequently used for ATP formation. The extrinsic proteins stabilize the structure of photosystem II oxygen-evolving complex (OEC), the ion environment of oxygen evolution and protect the OEC against heat-induced inactivation.</text>
</comment>
<comment type="subunit">
    <text evidence="1">PSII is composed of 1 copy each of membrane proteins PsbA, PsbB, PsbC, PsbD, PsbE, PsbF, PsbH, PsbI, PsbJ, PsbK, PsbL, PsbM, PsbT, PsbX, PsbY, Psb30/Ycf12, peripheral proteins PsbO, CyanoQ (PsbQ), PsbU, PsbV and a large number of cofactors. It forms dimeric complexes.</text>
</comment>
<comment type="subcellular location">
    <subcellularLocation>
        <location evidence="1">Cellular thylakoid membrane</location>
        <topology evidence="1">Peripheral membrane protein</topology>
        <orientation evidence="1">Lumenal side</orientation>
    </subcellularLocation>
</comment>
<comment type="similarity">
    <text evidence="1">Belongs to the PsbU family.</text>
</comment>
<organism>
    <name type="scientific">Prochlorococcus marinus (strain MIT 9303)</name>
    <dbReference type="NCBI Taxonomy" id="59922"/>
    <lineage>
        <taxon>Bacteria</taxon>
        <taxon>Bacillati</taxon>
        <taxon>Cyanobacteriota</taxon>
        <taxon>Cyanophyceae</taxon>
        <taxon>Synechococcales</taxon>
        <taxon>Prochlorococcaceae</taxon>
        <taxon>Prochlorococcus</taxon>
    </lineage>
</organism>
<name>PSBU_PROM3</name>
<reference key="1">
    <citation type="journal article" date="2007" name="PLoS Genet.">
        <title>Patterns and implications of gene gain and loss in the evolution of Prochlorococcus.</title>
        <authorList>
            <person name="Kettler G.C."/>
            <person name="Martiny A.C."/>
            <person name="Huang K."/>
            <person name="Zucker J."/>
            <person name="Coleman M.L."/>
            <person name="Rodrigue S."/>
            <person name="Chen F."/>
            <person name="Lapidus A."/>
            <person name="Ferriera S."/>
            <person name="Johnson J."/>
            <person name="Steglich C."/>
            <person name="Church G.M."/>
            <person name="Richardson P."/>
            <person name="Chisholm S.W."/>
        </authorList>
    </citation>
    <scope>NUCLEOTIDE SEQUENCE [LARGE SCALE GENOMIC DNA]</scope>
    <source>
        <strain>MIT 9303</strain>
    </source>
</reference>
<feature type="signal peptide" evidence="1">
    <location>
        <begin position="1"/>
        <end position="29"/>
    </location>
</feature>
<feature type="chain" id="PRO_0000295784" description="Photosystem II extrinsic protein U">
    <location>
        <begin position="30"/>
        <end position="120"/>
    </location>
</feature>